<accession>B0USS2</accession>
<dbReference type="EMBL" id="CP000947">
    <property type="protein sequence ID" value="ACA32511.1"/>
    <property type="molecule type" value="Genomic_DNA"/>
</dbReference>
<dbReference type="SMR" id="B0USS2"/>
<dbReference type="STRING" id="228400.HSM_0839"/>
<dbReference type="KEGG" id="hsm:HSM_0839"/>
<dbReference type="HOGENOM" id="CLU_038009_1_2_6"/>
<dbReference type="GO" id="GO:0005829">
    <property type="term" value="C:cytosol"/>
    <property type="evidence" value="ECO:0007669"/>
    <property type="project" value="TreeGrafter"/>
</dbReference>
<dbReference type="GO" id="GO:0005886">
    <property type="term" value="C:plasma membrane"/>
    <property type="evidence" value="ECO:0007669"/>
    <property type="project" value="UniProtKB-SubCell"/>
</dbReference>
<dbReference type="GO" id="GO:0005525">
    <property type="term" value="F:GTP binding"/>
    <property type="evidence" value="ECO:0007669"/>
    <property type="project" value="UniProtKB-UniRule"/>
</dbReference>
<dbReference type="GO" id="GO:0003924">
    <property type="term" value="F:GTPase activity"/>
    <property type="evidence" value="ECO:0007669"/>
    <property type="project" value="UniProtKB-UniRule"/>
</dbReference>
<dbReference type="GO" id="GO:0043024">
    <property type="term" value="F:ribosomal small subunit binding"/>
    <property type="evidence" value="ECO:0007669"/>
    <property type="project" value="TreeGrafter"/>
</dbReference>
<dbReference type="GO" id="GO:0070181">
    <property type="term" value="F:small ribosomal subunit rRNA binding"/>
    <property type="evidence" value="ECO:0007669"/>
    <property type="project" value="UniProtKB-UniRule"/>
</dbReference>
<dbReference type="GO" id="GO:0000028">
    <property type="term" value="P:ribosomal small subunit assembly"/>
    <property type="evidence" value="ECO:0007669"/>
    <property type="project" value="TreeGrafter"/>
</dbReference>
<dbReference type="CDD" id="cd04163">
    <property type="entry name" value="Era"/>
    <property type="match status" value="1"/>
</dbReference>
<dbReference type="CDD" id="cd22534">
    <property type="entry name" value="KH-II_Era"/>
    <property type="match status" value="1"/>
</dbReference>
<dbReference type="FunFam" id="3.30.300.20:FF:000003">
    <property type="entry name" value="GTPase Era"/>
    <property type="match status" value="1"/>
</dbReference>
<dbReference type="FunFam" id="3.40.50.300:FF:000094">
    <property type="entry name" value="GTPase Era"/>
    <property type="match status" value="1"/>
</dbReference>
<dbReference type="Gene3D" id="3.30.300.20">
    <property type="match status" value="1"/>
</dbReference>
<dbReference type="Gene3D" id="3.40.50.300">
    <property type="entry name" value="P-loop containing nucleotide triphosphate hydrolases"/>
    <property type="match status" value="1"/>
</dbReference>
<dbReference type="HAMAP" id="MF_00367">
    <property type="entry name" value="GTPase_Era"/>
    <property type="match status" value="1"/>
</dbReference>
<dbReference type="InterPro" id="IPR030388">
    <property type="entry name" value="G_ERA_dom"/>
</dbReference>
<dbReference type="InterPro" id="IPR006073">
    <property type="entry name" value="GTP-bd"/>
</dbReference>
<dbReference type="InterPro" id="IPR005662">
    <property type="entry name" value="GTPase_Era-like"/>
</dbReference>
<dbReference type="InterPro" id="IPR015946">
    <property type="entry name" value="KH_dom-like_a/b"/>
</dbReference>
<dbReference type="InterPro" id="IPR004044">
    <property type="entry name" value="KH_dom_type_2"/>
</dbReference>
<dbReference type="InterPro" id="IPR009019">
    <property type="entry name" value="KH_sf_prok-type"/>
</dbReference>
<dbReference type="InterPro" id="IPR027417">
    <property type="entry name" value="P-loop_NTPase"/>
</dbReference>
<dbReference type="InterPro" id="IPR005225">
    <property type="entry name" value="Small_GTP-bd"/>
</dbReference>
<dbReference type="NCBIfam" id="TIGR00436">
    <property type="entry name" value="era"/>
    <property type="match status" value="1"/>
</dbReference>
<dbReference type="NCBIfam" id="NF000908">
    <property type="entry name" value="PRK00089.1"/>
    <property type="match status" value="1"/>
</dbReference>
<dbReference type="NCBIfam" id="TIGR00231">
    <property type="entry name" value="small_GTP"/>
    <property type="match status" value="1"/>
</dbReference>
<dbReference type="PANTHER" id="PTHR42698">
    <property type="entry name" value="GTPASE ERA"/>
    <property type="match status" value="1"/>
</dbReference>
<dbReference type="PANTHER" id="PTHR42698:SF1">
    <property type="entry name" value="GTPASE ERA, MITOCHONDRIAL"/>
    <property type="match status" value="1"/>
</dbReference>
<dbReference type="Pfam" id="PF07650">
    <property type="entry name" value="KH_2"/>
    <property type="match status" value="1"/>
</dbReference>
<dbReference type="Pfam" id="PF01926">
    <property type="entry name" value="MMR_HSR1"/>
    <property type="match status" value="1"/>
</dbReference>
<dbReference type="PRINTS" id="PR00326">
    <property type="entry name" value="GTP1OBG"/>
</dbReference>
<dbReference type="SUPFAM" id="SSF52540">
    <property type="entry name" value="P-loop containing nucleoside triphosphate hydrolases"/>
    <property type="match status" value="1"/>
</dbReference>
<dbReference type="SUPFAM" id="SSF54814">
    <property type="entry name" value="Prokaryotic type KH domain (KH-domain type II)"/>
    <property type="match status" value="1"/>
</dbReference>
<dbReference type="PROSITE" id="PS51713">
    <property type="entry name" value="G_ERA"/>
    <property type="match status" value="1"/>
</dbReference>
<dbReference type="PROSITE" id="PS50823">
    <property type="entry name" value="KH_TYPE_2"/>
    <property type="match status" value="1"/>
</dbReference>
<organism>
    <name type="scientific">Histophilus somni (strain 2336)</name>
    <name type="common">Haemophilus somnus</name>
    <dbReference type="NCBI Taxonomy" id="228400"/>
    <lineage>
        <taxon>Bacteria</taxon>
        <taxon>Pseudomonadati</taxon>
        <taxon>Pseudomonadota</taxon>
        <taxon>Gammaproteobacteria</taxon>
        <taxon>Pasteurellales</taxon>
        <taxon>Pasteurellaceae</taxon>
        <taxon>Histophilus</taxon>
    </lineage>
</organism>
<proteinExistence type="inferred from homology"/>
<comment type="function">
    <text evidence="1">An essential GTPase that binds both GDP and GTP, with rapid nucleotide exchange. Plays a role in 16S rRNA processing and 30S ribosomal subunit biogenesis and possibly also in cell cycle regulation and energy metabolism.</text>
</comment>
<comment type="subunit">
    <text evidence="1">Monomer.</text>
</comment>
<comment type="subcellular location">
    <subcellularLocation>
        <location>Cytoplasm</location>
    </subcellularLocation>
    <subcellularLocation>
        <location evidence="1">Cell inner membrane</location>
        <topology evidence="1">Peripheral membrane protein</topology>
    </subcellularLocation>
</comment>
<comment type="similarity">
    <text evidence="1 2">Belongs to the TRAFAC class TrmE-Era-EngA-EngB-Septin-like GTPase superfamily. Era GTPase family.</text>
</comment>
<reference key="1">
    <citation type="submission" date="2008-02" db="EMBL/GenBank/DDBJ databases">
        <title>Complete sequence of Haemophilus somnus 2336.</title>
        <authorList>
            <consortium name="US DOE Joint Genome Institute"/>
            <person name="Siddaramappa S."/>
            <person name="Duncan A.J."/>
            <person name="Challacombe J.F."/>
            <person name="Rainey D."/>
            <person name="Gillaspy A.F."/>
            <person name="Carson M."/>
            <person name="Gipson J."/>
            <person name="Gipson M."/>
            <person name="Bruce D."/>
            <person name="Detter J.C."/>
            <person name="Han C.S."/>
            <person name="Land M."/>
            <person name="Tapia R."/>
            <person name="Thompson L.S."/>
            <person name="Orvis J."/>
            <person name="Zaitshik J."/>
            <person name="Barnes G."/>
            <person name="Brettin T.S."/>
            <person name="Dyer D.W."/>
            <person name="Inzana T.J."/>
        </authorList>
    </citation>
    <scope>NUCLEOTIDE SEQUENCE [LARGE SCALE GENOMIC DNA]</scope>
    <source>
        <strain>2336</strain>
    </source>
</reference>
<gene>
    <name evidence="1" type="primary">era</name>
    <name type="ordered locus">HSM_0839</name>
</gene>
<keyword id="KW-0997">Cell inner membrane</keyword>
<keyword id="KW-1003">Cell membrane</keyword>
<keyword id="KW-0963">Cytoplasm</keyword>
<keyword id="KW-0342">GTP-binding</keyword>
<keyword id="KW-0472">Membrane</keyword>
<keyword id="KW-0547">Nucleotide-binding</keyword>
<keyword id="KW-0690">Ribosome biogenesis</keyword>
<keyword id="KW-0694">RNA-binding</keyword>
<keyword id="KW-0699">rRNA-binding</keyword>
<sequence length="304" mass="34837">MREKMTEQETYCGFIAIVGRPNVGKSTLLNKILGQKISITSRKAQTTRHRIVGIHTEGVYQAVYVDTPGLHIEEKRAINRLMNRAASSAIGDVDLIIFVVDGTHWNDDDEMVLNKLRRAKAPVVLAINKVDNIKNKDELLPFITDVSQKLEFKEIIPISAQRGNNIHNLEKIVRTSLRKGVHHFPEDYVTDRSQRFMASEIIREKLMRFTGEELPYSVTVEIEQFKLNDRGIYEINGLILVEREGQKKMVIGAKGQKLKTIGTEARQDMERLFDNKVHLELWVKVKSGWADDERALRSLGYIDE</sequence>
<name>ERA_HISS2</name>
<protein>
    <recommendedName>
        <fullName evidence="1">GTPase Era</fullName>
    </recommendedName>
</protein>
<feature type="chain" id="PRO_1000079699" description="GTPase Era">
    <location>
        <begin position="1"/>
        <end position="304"/>
    </location>
</feature>
<feature type="domain" description="Era-type G" evidence="2">
    <location>
        <begin position="11"/>
        <end position="186"/>
    </location>
</feature>
<feature type="domain" description="KH type-2" evidence="1">
    <location>
        <begin position="210"/>
        <end position="287"/>
    </location>
</feature>
<feature type="region of interest" description="G1" evidence="2">
    <location>
        <begin position="19"/>
        <end position="26"/>
    </location>
</feature>
<feature type="region of interest" description="G2" evidence="2">
    <location>
        <begin position="45"/>
        <end position="49"/>
    </location>
</feature>
<feature type="region of interest" description="G3" evidence="2">
    <location>
        <begin position="66"/>
        <end position="69"/>
    </location>
</feature>
<feature type="region of interest" description="G4" evidence="2">
    <location>
        <begin position="128"/>
        <end position="131"/>
    </location>
</feature>
<feature type="region of interest" description="G5" evidence="2">
    <location>
        <begin position="158"/>
        <end position="160"/>
    </location>
</feature>
<feature type="binding site" evidence="1">
    <location>
        <begin position="19"/>
        <end position="26"/>
    </location>
    <ligand>
        <name>GTP</name>
        <dbReference type="ChEBI" id="CHEBI:37565"/>
    </ligand>
</feature>
<feature type="binding site" evidence="1">
    <location>
        <begin position="66"/>
        <end position="70"/>
    </location>
    <ligand>
        <name>GTP</name>
        <dbReference type="ChEBI" id="CHEBI:37565"/>
    </ligand>
</feature>
<feature type="binding site" evidence="1">
    <location>
        <begin position="128"/>
        <end position="131"/>
    </location>
    <ligand>
        <name>GTP</name>
        <dbReference type="ChEBI" id="CHEBI:37565"/>
    </ligand>
</feature>
<evidence type="ECO:0000255" key="1">
    <source>
        <dbReference type="HAMAP-Rule" id="MF_00367"/>
    </source>
</evidence>
<evidence type="ECO:0000255" key="2">
    <source>
        <dbReference type="PROSITE-ProRule" id="PRU01050"/>
    </source>
</evidence>